<gene>
    <name evidence="1" type="primary">pfkA</name>
    <name type="ordered locus">BBR47_13830</name>
</gene>
<comment type="function">
    <text evidence="1">Catalyzes the phosphorylation of D-fructose 6-phosphate to fructose 1,6-bisphosphate by ATP, the first committing step of glycolysis.</text>
</comment>
<comment type="catalytic activity">
    <reaction evidence="1">
        <text>beta-D-fructose 6-phosphate + ATP = beta-D-fructose 1,6-bisphosphate + ADP + H(+)</text>
        <dbReference type="Rhea" id="RHEA:16109"/>
        <dbReference type="ChEBI" id="CHEBI:15378"/>
        <dbReference type="ChEBI" id="CHEBI:30616"/>
        <dbReference type="ChEBI" id="CHEBI:32966"/>
        <dbReference type="ChEBI" id="CHEBI:57634"/>
        <dbReference type="ChEBI" id="CHEBI:456216"/>
        <dbReference type="EC" id="2.7.1.11"/>
    </reaction>
</comment>
<comment type="cofactor">
    <cofactor evidence="1">
        <name>Mg(2+)</name>
        <dbReference type="ChEBI" id="CHEBI:18420"/>
    </cofactor>
</comment>
<comment type="activity regulation">
    <text evidence="1">Allosterically activated by ADP and other diphosphonucleosides, and allosterically inhibited by phosphoenolpyruvate.</text>
</comment>
<comment type="pathway">
    <text evidence="1">Carbohydrate degradation; glycolysis; D-glyceraldehyde 3-phosphate and glycerone phosphate from D-glucose: step 3/4.</text>
</comment>
<comment type="subunit">
    <text evidence="1">Homotetramer.</text>
</comment>
<comment type="subcellular location">
    <subcellularLocation>
        <location evidence="1">Cytoplasm</location>
    </subcellularLocation>
</comment>
<comment type="similarity">
    <text evidence="1">Belongs to the phosphofructokinase type A (PFKA) family. ATP-dependent PFK group I subfamily. Prokaryotic clade 'B1' sub-subfamily.</text>
</comment>
<proteinExistence type="inferred from homology"/>
<reference key="1">
    <citation type="submission" date="2005-03" db="EMBL/GenBank/DDBJ databases">
        <title>Brevibacillus brevis strain 47, complete genome.</title>
        <authorList>
            <person name="Hosoyama A."/>
            <person name="Yamada R."/>
            <person name="Hongo Y."/>
            <person name="Terui Y."/>
            <person name="Ankai A."/>
            <person name="Masuyama W."/>
            <person name="Sekiguchi M."/>
            <person name="Takeda T."/>
            <person name="Asano K."/>
            <person name="Ohji S."/>
            <person name="Ichikawa N."/>
            <person name="Narita S."/>
            <person name="Aoki N."/>
            <person name="Miura H."/>
            <person name="Matsushita S."/>
            <person name="Sekigawa T."/>
            <person name="Yamagata H."/>
            <person name="Yoshikawa H."/>
            <person name="Udaka S."/>
            <person name="Tanikawa S."/>
            <person name="Fujita N."/>
        </authorList>
    </citation>
    <scope>NUCLEOTIDE SEQUENCE [LARGE SCALE GENOMIC DNA]</scope>
    <source>
        <strain>47 / JCM 6285 / NBRC 100599</strain>
    </source>
</reference>
<accession>C0Z7W7</accession>
<feature type="chain" id="PRO_1000192364" description="ATP-dependent 6-phosphofructokinase">
    <location>
        <begin position="1"/>
        <end position="319"/>
    </location>
</feature>
<feature type="active site" description="Proton acceptor" evidence="1">
    <location>
        <position position="127"/>
    </location>
</feature>
<feature type="binding site" evidence="1">
    <location>
        <position position="11"/>
    </location>
    <ligand>
        <name>ATP</name>
        <dbReference type="ChEBI" id="CHEBI:30616"/>
    </ligand>
</feature>
<feature type="binding site" evidence="1">
    <location>
        <begin position="21"/>
        <end position="25"/>
    </location>
    <ligand>
        <name>ADP</name>
        <dbReference type="ChEBI" id="CHEBI:456216"/>
        <note>allosteric activator; ligand shared between dimeric partners</note>
    </ligand>
</feature>
<feature type="binding site" evidence="1">
    <location>
        <begin position="72"/>
        <end position="73"/>
    </location>
    <ligand>
        <name>ATP</name>
        <dbReference type="ChEBI" id="CHEBI:30616"/>
    </ligand>
</feature>
<feature type="binding site" evidence="1">
    <location>
        <begin position="102"/>
        <end position="105"/>
    </location>
    <ligand>
        <name>ATP</name>
        <dbReference type="ChEBI" id="CHEBI:30616"/>
    </ligand>
</feature>
<feature type="binding site" evidence="1">
    <location>
        <position position="103"/>
    </location>
    <ligand>
        <name>Mg(2+)</name>
        <dbReference type="ChEBI" id="CHEBI:18420"/>
        <note>catalytic</note>
    </ligand>
</feature>
<feature type="binding site" description="in other chain" evidence="1">
    <location>
        <begin position="125"/>
        <end position="127"/>
    </location>
    <ligand>
        <name>substrate</name>
        <note>ligand shared between dimeric partners</note>
    </ligand>
</feature>
<feature type="binding site" description="in other chain" evidence="1">
    <location>
        <position position="154"/>
    </location>
    <ligand>
        <name>ADP</name>
        <dbReference type="ChEBI" id="CHEBI:456216"/>
        <note>allosteric activator; ligand shared between dimeric partners</note>
    </ligand>
</feature>
<feature type="binding site" evidence="1">
    <location>
        <position position="162"/>
    </location>
    <ligand>
        <name>substrate</name>
        <note>ligand shared between dimeric partners</note>
    </ligand>
</feature>
<feature type="binding site" description="in other chain" evidence="1">
    <location>
        <begin position="169"/>
        <end position="171"/>
    </location>
    <ligand>
        <name>substrate</name>
        <note>ligand shared between dimeric partners</note>
    </ligand>
</feature>
<feature type="binding site" description="in other chain" evidence="1">
    <location>
        <begin position="185"/>
        <end position="187"/>
    </location>
    <ligand>
        <name>ADP</name>
        <dbReference type="ChEBI" id="CHEBI:456216"/>
        <note>allosteric activator; ligand shared between dimeric partners</note>
    </ligand>
</feature>
<feature type="binding site" description="in other chain" evidence="1">
    <location>
        <position position="211"/>
    </location>
    <ligand>
        <name>ADP</name>
        <dbReference type="ChEBI" id="CHEBI:456216"/>
        <note>allosteric activator; ligand shared between dimeric partners</note>
    </ligand>
</feature>
<feature type="binding site" description="in other chain" evidence="1">
    <location>
        <begin position="213"/>
        <end position="215"/>
    </location>
    <ligand>
        <name>ADP</name>
        <dbReference type="ChEBI" id="CHEBI:456216"/>
        <note>allosteric activator; ligand shared between dimeric partners</note>
    </ligand>
</feature>
<feature type="binding site" description="in other chain" evidence="1">
    <location>
        <position position="222"/>
    </location>
    <ligand>
        <name>substrate</name>
        <note>ligand shared between dimeric partners</note>
    </ligand>
</feature>
<feature type="binding site" evidence="1">
    <location>
        <position position="243"/>
    </location>
    <ligand>
        <name>substrate</name>
        <note>ligand shared between dimeric partners</note>
    </ligand>
</feature>
<feature type="binding site" description="in other chain" evidence="1">
    <location>
        <begin position="249"/>
        <end position="252"/>
    </location>
    <ligand>
        <name>substrate</name>
        <note>ligand shared between dimeric partners</note>
    </ligand>
</feature>
<keyword id="KW-0021">Allosteric enzyme</keyword>
<keyword id="KW-0067">ATP-binding</keyword>
<keyword id="KW-0963">Cytoplasm</keyword>
<keyword id="KW-0324">Glycolysis</keyword>
<keyword id="KW-0418">Kinase</keyword>
<keyword id="KW-0460">Magnesium</keyword>
<keyword id="KW-0479">Metal-binding</keyword>
<keyword id="KW-0547">Nucleotide-binding</keyword>
<keyword id="KW-1185">Reference proteome</keyword>
<keyword id="KW-0808">Transferase</keyword>
<evidence type="ECO:0000255" key="1">
    <source>
        <dbReference type="HAMAP-Rule" id="MF_00339"/>
    </source>
</evidence>
<name>PFKA_BREBN</name>
<dbReference type="EC" id="2.7.1.11" evidence="1"/>
<dbReference type="EMBL" id="AP008955">
    <property type="protein sequence ID" value="BAH42360.1"/>
    <property type="molecule type" value="Genomic_DNA"/>
</dbReference>
<dbReference type="RefSeq" id="WP_012685109.1">
    <property type="nucleotide sequence ID" value="NC_012491.1"/>
</dbReference>
<dbReference type="SMR" id="C0Z7W7"/>
<dbReference type="STRING" id="358681.BBR47_13830"/>
<dbReference type="KEGG" id="bbe:BBR47_13830"/>
<dbReference type="eggNOG" id="COG0205">
    <property type="taxonomic scope" value="Bacteria"/>
</dbReference>
<dbReference type="HOGENOM" id="CLU_020655_0_1_9"/>
<dbReference type="UniPathway" id="UPA00109">
    <property type="reaction ID" value="UER00182"/>
</dbReference>
<dbReference type="Proteomes" id="UP000001877">
    <property type="component" value="Chromosome"/>
</dbReference>
<dbReference type="GO" id="GO:0005945">
    <property type="term" value="C:6-phosphofructokinase complex"/>
    <property type="evidence" value="ECO:0007669"/>
    <property type="project" value="TreeGrafter"/>
</dbReference>
<dbReference type="GO" id="GO:0003872">
    <property type="term" value="F:6-phosphofructokinase activity"/>
    <property type="evidence" value="ECO:0007669"/>
    <property type="project" value="UniProtKB-UniRule"/>
</dbReference>
<dbReference type="GO" id="GO:0016208">
    <property type="term" value="F:AMP binding"/>
    <property type="evidence" value="ECO:0007669"/>
    <property type="project" value="TreeGrafter"/>
</dbReference>
<dbReference type="GO" id="GO:0005524">
    <property type="term" value="F:ATP binding"/>
    <property type="evidence" value="ECO:0007669"/>
    <property type="project" value="UniProtKB-KW"/>
</dbReference>
<dbReference type="GO" id="GO:0070095">
    <property type="term" value="F:fructose-6-phosphate binding"/>
    <property type="evidence" value="ECO:0007669"/>
    <property type="project" value="TreeGrafter"/>
</dbReference>
<dbReference type="GO" id="GO:0042802">
    <property type="term" value="F:identical protein binding"/>
    <property type="evidence" value="ECO:0007669"/>
    <property type="project" value="TreeGrafter"/>
</dbReference>
<dbReference type="GO" id="GO:0046872">
    <property type="term" value="F:metal ion binding"/>
    <property type="evidence" value="ECO:0007669"/>
    <property type="project" value="UniProtKB-KW"/>
</dbReference>
<dbReference type="GO" id="GO:0048029">
    <property type="term" value="F:monosaccharide binding"/>
    <property type="evidence" value="ECO:0007669"/>
    <property type="project" value="TreeGrafter"/>
</dbReference>
<dbReference type="GO" id="GO:0061621">
    <property type="term" value="P:canonical glycolysis"/>
    <property type="evidence" value="ECO:0007669"/>
    <property type="project" value="TreeGrafter"/>
</dbReference>
<dbReference type="GO" id="GO:0030388">
    <property type="term" value="P:fructose 1,6-bisphosphate metabolic process"/>
    <property type="evidence" value="ECO:0007669"/>
    <property type="project" value="TreeGrafter"/>
</dbReference>
<dbReference type="GO" id="GO:0006002">
    <property type="term" value="P:fructose 6-phosphate metabolic process"/>
    <property type="evidence" value="ECO:0007669"/>
    <property type="project" value="InterPro"/>
</dbReference>
<dbReference type="FunFam" id="3.40.50.450:FF:000001">
    <property type="entry name" value="ATP-dependent 6-phosphofructokinase"/>
    <property type="match status" value="1"/>
</dbReference>
<dbReference type="FunFam" id="3.40.50.460:FF:000002">
    <property type="entry name" value="ATP-dependent 6-phosphofructokinase"/>
    <property type="match status" value="1"/>
</dbReference>
<dbReference type="Gene3D" id="3.40.50.450">
    <property type="match status" value="1"/>
</dbReference>
<dbReference type="Gene3D" id="3.40.50.460">
    <property type="entry name" value="Phosphofructokinase domain"/>
    <property type="match status" value="1"/>
</dbReference>
<dbReference type="HAMAP" id="MF_00339">
    <property type="entry name" value="Phosphofructokinase_I_B1"/>
    <property type="match status" value="1"/>
</dbReference>
<dbReference type="InterPro" id="IPR022953">
    <property type="entry name" value="ATP_PFK"/>
</dbReference>
<dbReference type="InterPro" id="IPR012003">
    <property type="entry name" value="ATP_PFK_prok-type"/>
</dbReference>
<dbReference type="InterPro" id="IPR012828">
    <property type="entry name" value="PFKA_ATP_prok"/>
</dbReference>
<dbReference type="InterPro" id="IPR015912">
    <property type="entry name" value="Phosphofructokinase_CS"/>
</dbReference>
<dbReference type="InterPro" id="IPR000023">
    <property type="entry name" value="Phosphofructokinase_dom"/>
</dbReference>
<dbReference type="InterPro" id="IPR035966">
    <property type="entry name" value="PKF_sf"/>
</dbReference>
<dbReference type="NCBIfam" id="TIGR02482">
    <property type="entry name" value="PFKA_ATP"/>
    <property type="match status" value="1"/>
</dbReference>
<dbReference type="NCBIfam" id="NF002872">
    <property type="entry name" value="PRK03202.1"/>
    <property type="match status" value="1"/>
</dbReference>
<dbReference type="PANTHER" id="PTHR13697:SF4">
    <property type="entry name" value="ATP-DEPENDENT 6-PHOSPHOFRUCTOKINASE"/>
    <property type="match status" value="1"/>
</dbReference>
<dbReference type="PANTHER" id="PTHR13697">
    <property type="entry name" value="PHOSPHOFRUCTOKINASE"/>
    <property type="match status" value="1"/>
</dbReference>
<dbReference type="Pfam" id="PF00365">
    <property type="entry name" value="PFK"/>
    <property type="match status" value="1"/>
</dbReference>
<dbReference type="PIRSF" id="PIRSF000532">
    <property type="entry name" value="ATP_PFK_prok"/>
    <property type="match status" value="1"/>
</dbReference>
<dbReference type="PRINTS" id="PR00476">
    <property type="entry name" value="PHFRCTKINASE"/>
</dbReference>
<dbReference type="SUPFAM" id="SSF53784">
    <property type="entry name" value="Phosphofructokinase"/>
    <property type="match status" value="1"/>
</dbReference>
<dbReference type="PROSITE" id="PS00433">
    <property type="entry name" value="PHOSPHOFRUCTOKINASE"/>
    <property type="match status" value="1"/>
</dbReference>
<sequence>MRKLAVLTSGGDSPGMNAAVRAAVRRAHFHEVQMFGVYHGYEGLMRGDIKEMSLGSVGDIIQRGGTILYSARSEAFKTEAGQQRAVEQLRAHEIEGLIVIGGDGSFRGAQKLTEKGFPTIGVPGTIDNDIPCTDFTIGFDTALNTVVEAIDKIRDTATSHERTYIIEVMGRDAGDLALWAGLAAGAESIMIPEASQDMDDIIERLHAGQRRGKKHSIIIVAEGVGSAASYAEAITKETGWETRVTVLGHIQRGGSPTAMDRMLASRMGAAAVDLLLEGKQDRMVGVQNNQIVDVDFQEALAKKHQLDLSIYQLARTLSI</sequence>
<protein>
    <recommendedName>
        <fullName evidence="1">ATP-dependent 6-phosphofructokinase</fullName>
        <shortName evidence="1">ATP-PFK</shortName>
        <shortName evidence="1">Phosphofructokinase</shortName>
        <ecNumber evidence="1">2.7.1.11</ecNumber>
    </recommendedName>
    <alternativeName>
        <fullName evidence="1">Phosphohexokinase</fullName>
    </alternativeName>
</protein>
<organism>
    <name type="scientific">Brevibacillus brevis (strain 47 / JCM 6285 / NBRC 100599)</name>
    <dbReference type="NCBI Taxonomy" id="358681"/>
    <lineage>
        <taxon>Bacteria</taxon>
        <taxon>Bacillati</taxon>
        <taxon>Bacillota</taxon>
        <taxon>Bacilli</taxon>
        <taxon>Bacillales</taxon>
        <taxon>Paenibacillaceae</taxon>
        <taxon>Brevibacillus</taxon>
    </lineage>
</organism>